<sequence length="118" mass="13226">MTDLIPLEQAHCLPRKGSDHKLGEARLAELLPQVPGWELAEAGMALTRTFRFPDYCRTLAFVNALAWIAHREDHHPDLGVHYDRVVVRYSTHDVGGLSENDFICAAKTARLYDQGITG</sequence>
<accession>B2STN6</accession>
<protein>
    <recommendedName>
        <fullName evidence="1">Putative pterin-4-alpha-carbinolamine dehydratase</fullName>
        <shortName evidence="1">PHS</shortName>
        <ecNumber evidence="1">4.2.1.96</ecNumber>
    </recommendedName>
    <alternativeName>
        <fullName evidence="1">4-alpha-hydroxy-tetrahydropterin dehydratase</fullName>
    </alternativeName>
    <alternativeName>
        <fullName evidence="1">Pterin carbinolamine dehydratase</fullName>
        <shortName evidence="1">PCD</shortName>
    </alternativeName>
</protein>
<name>PHS_XANOP</name>
<evidence type="ECO:0000255" key="1">
    <source>
        <dbReference type="HAMAP-Rule" id="MF_00434"/>
    </source>
</evidence>
<gene>
    <name type="ordered locus">PXO_01523</name>
</gene>
<feature type="chain" id="PRO_1000192944" description="Putative pterin-4-alpha-carbinolamine dehydratase">
    <location>
        <begin position="1"/>
        <end position="118"/>
    </location>
</feature>
<reference key="1">
    <citation type="journal article" date="2008" name="BMC Genomics">
        <title>Genome sequence and rapid evolution of the rice pathogen Xanthomonas oryzae pv. oryzae PXO99A.</title>
        <authorList>
            <person name="Salzberg S.L."/>
            <person name="Sommer D.D."/>
            <person name="Schatz M.C."/>
            <person name="Phillippy A.M."/>
            <person name="Rabinowicz P.D."/>
            <person name="Tsuge S."/>
            <person name="Furutani A."/>
            <person name="Ochiai H."/>
            <person name="Delcher A.L."/>
            <person name="Kelley D."/>
            <person name="Madupu R."/>
            <person name="Puiu D."/>
            <person name="Radune D."/>
            <person name="Shumway M."/>
            <person name="Trapnell C."/>
            <person name="Aparna G."/>
            <person name="Jha G."/>
            <person name="Pandey A."/>
            <person name="Patil P.B."/>
            <person name="Ishihara H."/>
            <person name="Meyer D.F."/>
            <person name="Szurek B."/>
            <person name="Verdier V."/>
            <person name="Koebnik R."/>
            <person name="Dow J.M."/>
            <person name="Ryan R.P."/>
            <person name="Hirata H."/>
            <person name="Tsuyumu S."/>
            <person name="Won Lee S."/>
            <person name="Seo Y.-S."/>
            <person name="Sriariyanum M."/>
            <person name="Ronald P.C."/>
            <person name="Sonti R.V."/>
            <person name="Van Sluys M.-A."/>
            <person name="Leach J.E."/>
            <person name="White F.F."/>
            <person name="Bogdanove A.J."/>
        </authorList>
    </citation>
    <scope>NUCLEOTIDE SEQUENCE [LARGE SCALE GENOMIC DNA]</scope>
    <source>
        <strain>PXO99A</strain>
    </source>
</reference>
<dbReference type="EC" id="4.2.1.96" evidence="1"/>
<dbReference type="EMBL" id="CP000967">
    <property type="protein sequence ID" value="ACD59866.1"/>
    <property type="molecule type" value="Genomic_DNA"/>
</dbReference>
<dbReference type="RefSeq" id="WP_012445382.1">
    <property type="nucleotide sequence ID" value="NC_010717.2"/>
</dbReference>
<dbReference type="SMR" id="B2STN6"/>
<dbReference type="KEGG" id="xop:PXO_01523"/>
<dbReference type="eggNOG" id="COG2154">
    <property type="taxonomic scope" value="Bacteria"/>
</dbReference>
<dbReference type="HOGENOM" id="CLU_081974_2_1_6"/>
<dbReference type="Proteomes" id="UP000001740">
    <property type="component" value="Chromosome"/>
</dbReference>
<dbReference type="GO" id="GO:0008124">
    <property type="term" value="F:4-alpha-hydroxytetrahydrobiopterin dehydratase activity"/>
    <property type="evidence" value="ECO:0007669"/>
    <property type="project" value="UniProtKB-UniRule"/>
</dbReference>
<dbReference type="GO" id="GO:0006729">
    <property type="term" value="P:tetrahydrobiopterin biosynthetic process"/>
    <property type="evidence" value="ECO:0007669"/>
    <property type="project" value="InterPro"/>
</dbReference>
<dbReference type="CDD" id="cd00913">
    <property type="entry name" value="PCD_DCoH_subfamily_a"/>
    <property type="match status" value="1"/>
</dbReference>
<dbReference type="Gene3D" id="3.30.1360.20">
    <property type="entry name" value="Transcriptional coactivator/pterin dehydratase"/>
    <property type="match status" value="1"/>
</dbReference>
<dbReference type="HAMAP" id="MF_00434">
    <property type="entry name" value="Pterin_4_alpha"/>
    <property type="match status" value="1"/>
</dbReference>
<dbReference type="InterPro" id="IPR036428">
    <property type="entry name" value="PCD_sf"/>
</dbReference>
<dbReference type="InterPro" id="IPR001533">
    <property type="entry name" value="Pterin_deHydtase"/>
</dbReference>
<dbReference type="NCBIfam" id="NF002019">
    <property type="entry name" value="PRK00823.1-4"/>
    <property type="match status" value="1"/>
</dbReference>
<dbReference type="PANTHER" id="PTHR12599">
    <property type="entry name" value="PTERIN-4-ALPHA-CARBINOLAMINE DEHYDRATASE"/>
    <property type="match status" value="1"/>
</dbReference>
<dbReference type="PANTHER" id="PTHR12599:SF0">
    <property type="entry name" value="PTERIN-4-ALPHA-CARBINOLAMINE DEHYDRATASE"/>
    <property type="match status" value="1"/>
</dbReference>
<dbReference type="Pfam" id="PF01329">
    <property type="entry name" value="Pterin_4a"/>
    <property type="match status" value="1"/>
</dbReference>
<dbReference type="SUPFAM" id="SSF55248">
    <property type="entry name" value="PCD-like"/>
    <property type="match status" value="1"/>
</dbReference>
<organism>
    <name type="scientific">Xanthomonas oryzae pv. oryzae (strain PXO99A)</name>
    <dbReference type="NCBI Taxonomy" id="360094"/>
    <lineage>
        <taxon>Bacteria</taxon>
        <taxon>Pseudomonadati</taxon>
        <taxon>Pseudomonadota</taxon>
        <taxon>Gammaproteobacteria</taxon>
        <taxon>Lysobacterales</taxon>
        <taxon>Lysobacteraceae</taxon>
        <taxon>Xanthomonas</taxon>
    </lineage>
</organism>
<proteinExistence type="inferred from homology"/>
<comment type="catalytic activity">
    <reaction evidence="1">
        <text>(4aS,6R)-4a-hydroxy-L-erythro-5,6,7,8-tetrahydrobiopterin = (6R)-L-erythro-6,7-dihydrobiopterin + H2O</text>
        <dbReference type="Rhea" id="RHEA:11920"/>
        <dbReference type="ChEBI" id="CHEBI:15377"/>
        <dbReference type="ChEBI" id="CHEBI:15642"/>
        <dbReference type="ChEBI" id="CHEBI:43120"/>
        <dbReference type="EC" id="4.2.1.96"/>
    </reaction>
</comment>
<comment type="similarity">
    <text evidence="1">Belongs to the pterin-4-alpha-carbinolamine dehydratase family.</text>
</comment>
<keyword id="KW-0456">Lyase</keyword>